<proteinExistence type="inferred from homology"/>
<keyword id="KW-1185">Reference proteome</keyword>
<sequence length="100" mass="11242">MTPWFLYLIRTADNKLYTGITTDVERRYQQHQSGKGAKALRGKGELTLAFSAPVGDRSLALRAEYRVKQLTKRQKERLVAEGAGFAELLSSLQTPEIKSD</sequence>
<reference key="1">
    <citation type="journal article" date="2002" name="Nucleic Acids Res.">
        <title>Genome sequence of Shigella flexneri 2a: insights into pathogenicity through comparison with genomes of Escherichia coli K12 and O157.</title>
        <authorList>
            <person name="Jin Q."/>
            <person name="Yuan Z."/>
            <person name="Xu J."/>
            <person name="Wang Y."/>
            <person name="Shen Y."/>
            <person name="Lu W."/>
            <person name="Wang J."/>
            <person name="Liu H."/>
            <person name="Yang J."/>
            <person name="Yang F."/>
            <person name="Zhang X."/>
            <person name="Zhang J."/>
            <person name="Yang G."/>
            <person name="Wu H."/>
            <person name="Qu D."/>
            <person name="Dong J."/>
            <person name="Sun L."/>
            <person name="Xue Y."/>
            <person name="Zhao A."/>
            <person name="Gao Y."/>
            <person name="Zhu J."/>
            <person name="Kan B."/>
            <person name="Ding K."/>
            <person name="Chen S."/>
            <person name="Cheng H."/>
            <person name="Yao Z."/>
            <person name="He B."/>
            <person name="Chen R."/>
            <person name="Ma D."/>
            <person name="Qiang B."/>
            <person name="Wen Y."/>
            <person name="Hou Y."/>
            <person name="Yu J."/>
        </authorList>
    </citation>
    <scope>NUCLEOTIDE SEQUENCE [LARGE SCALE GENOMIC DNA]</scope>
    <source>
        <strain>301 / Serotype 2a</strain>
    </source>
</reference>
<reference key="2">
    <citation type="journal article" date="2003" name="Infect. Immun.">
        <title>Complete genome sequence and comparative genomics of Shigella flexneri serotype 2a strain 2457T.</title>
        <authorList>
            <person name="Wei J."/>
            <person name="Goldberg M.B."/>
            <person name="Burland V."/>
            <person name="Venkatesan M.M."/>
            <person name="Deng W."/>
            <person name="Fournier G."/>
            <person name="Mayhew G.F."/>
            <person name="Plunkett G. III"/>
            <person name="Rose D.J."/>
            <person name="Darling A."/>
            <person name="Mau B."/>
            <person name="Perna N.T."/>
            <person name="Payne S.M."/>
            <person name="Runyen-Janecky L.J."/>
            <person name="Zhou S."/>
            <person name="Schwartz D.C."/>
            <person name="Blattner F.R."/>
        </authorList>
    </citation>
    <scope>NUCLEOTIDE SEQUENCE [LARGE SCALE GENOMIC DNA]</scope>
    <source>
        <strain>ATCC 700930 / 2457T / Serotype 2a</strain>
    </source>
</reference>
<evidence type="ECO:0000255" key="1">
    <source>
        <dbReference type="HAMAP-Rule" id="MF_01029"/>
    </source>
</evidence>
<name>YHBQ_SHIFL</name>
<organism>
    <name type="scientific">Shigella flexneri</name>
    <dbReference type="NCBI Taxonomy" id="623"/>
    <lineage>
        <taxon>Bacteria</taxon>
        <taxon>Pseudomonadati</taxon>
        <taxon>Pseudomonadota</taxon>
        <taxon>Gammaproteobacteria</taxon>
        <taxon>Enterobacterales</taxon>
        <taxon>Enterobacteriaceae</taxon>
        <taxon>Shigella</taxon>
    </lineage>
</organism>
<dbReference type="EMBL" id="AE005674">
    <property type="protein sequence ID" value="AAN44663.2"/>
    <property type="molecule type" value="Genomic_DNA"/>
</dbReference>
<dbReference type="EMBL" id="AE014073">
    <property type="protein sequence ID" value="AAP18477.1"/>
    <property type="molecule type" value="Genomic_DNA"/>
</dbReference>
<dbReference type="RefSeq" id="NP_708956.2">
    <property type="nucleotide sequence ID" value="NC_004337.2"/>
</dbReference>
<dbReference type="RefSeq" id="WP_000189314.1">
    <property type="nucleotide sequence ID" value="NZ_WPGW01000004.1"/>
</dbReference>
<dbReference type="SMR" id="Q83JG5"/>
<dbReference type="STRING" id="198214.SF3196"/>
<dbReference type="PaxDb" id="198214-SF3196"/>
<dbReference type="GeneID" id="1027134"/>
<dbReference type="GeneID" id="93778829"/>
<dbReference type="KEGG" id="sfl:SF3196"/>
<dbReference type="KEGG" id="sfx:S3413"/>
<dbReference type="PATRIC" id="fig|198214.7.peg.3795"/>
<dbReference type="HOGENOM" id="CLU_135650_0_1_6"/>
<dbReference type="Proteomes" id="UP000001006">
    <property type="component" value="Chromosome"/>
</dbReference>
<dbReference type="Proteomes" id="UP000002673">
    <property type="component" value="Chromosome"/>
</dbReference>
<dbReference type="CDD" id="cd10456">
    <property type="entry name" value="GIY-YIG_UPF0213"/>
    <property type="match status" value="1"/>
</dbReference>
<dbReference type="FunFam" id="3.40.1440.10:FF:000002">
    <property type="entry name" value="UPF0213 protein YhbQ"/>
    <property type="match status" value="1"/>
</dbReference>
<dbReference type="Gene3D" id="3.40.1440.10">
    <property type="entry name" value="GIY-YIG endonuclease"/>
    <property type="match status" value="1"/>
</dbReference>
<dbReference type="HAMAP" id="MF_01029">
    <property type="entry name" value="UPF0213"/>
    <property type="match status" value="1"/>
</dbReference>
<dbReference type="InterPro" id="IPR000305">
    <property type="entry name" value="GIY-YIG_endonuc"/>
</dbReference>
<dbReference type="InterPro" id="IPR035901">
    <property type="entry name" value="GIY-YIG_endonuc_sf"/>
</dbReference>
<dbReference type="InterPro" id="IPR050190">
    <property type="entry name" value="UPF0213_domain"/>
</dbReference>
<dbReference type="InterPro" id="IPR022992">
    <property type="entry name" value="UPF0213_GIY-YIG_endonuc"/>
</dbReference>
<dbReference type="PANTHER" id="PTHR34477">
    <property type="entry name" value="UPF0213 PROTEIN YHBQ"/>
    <property type="match status" value="1"/>
</dbReference>
<dbReference type="PANTHER" id="PTHR34477:SF1">
    <property type="entry name" value="UPF0213 PROTEIN YHBQ"/>
    <property type="match status" value="1"/>
</dbReference>
<dbReference type="Pfam" id="PF01541">
    <property type="entry name" value="GIY-YIG"/>
    <property type="match status" value="1"/>
</dbReference>
<dbReference type="SMART" id="SM00465">
    <property type="entry name" value="GIYc"/>
    <property type="match status" value="1"/>
</dbReference>
<dbReference type="SUPFAM" id="SSF82771">
    <property type="entry name" value="GIY-YIG endonuclease"/>
    <property type="match status" value="1"/>
</dbReference>
<dbReference type="PROSITE" id="PS50164">
    <property type="entry name" value="GIY_YIG"/>
    <property type="match status" value="1"/>
</dbReference>
<accession>Q83JG5</accession>
<accession>Q7UBF9</accession>
<protein>
    <recommendedName>
        <fullName evidence="1">UPF0213 protein YhbQ</fullName>
    </recommendedName>
</protein>
<feature type="chain" id="PRO_0000161379" description="UPF0213 protein YhbQ">
    <location>
        <begin position="1"/>
        <end position="100"/>
    </location>
</feature>
<feature type="domain" description="GIY-YIG" evidence="1">
    <location>
        <begin position="2"/>
        <end position="77"/>
    </location>
</feature>
<gene>
    <name evidence="1" type="primary">yhbQ</name>
    <name type="ordered locus">SF3196</name>
    <name type="ordered locus">S3413</name>
</gene>
<comment type="similarity">
    <text evidence="1">Belongs to the UPF0213 family.</text>
</comment>